<reference key="1">
    <citation type="journal article" date="2003" name="J. Biol. Chem.">
        <title>Calcineurin/nuclear factors of activated T cells (NFAT)-activating and immunoreceptor tyrosine-based activation motif (ITAM)-containing protein (CNAIP), a novel ITAM-containing protein that activates the calcineurin/NFAT-signaling pathway.</title>
        <authorList>
            <person name="Yang J."/>
            <person name="Hu G."/>
            <person name="Wang S.W."/>
            <person name="Li Y."/>
            <person name="Martin R."/>
            <person name="Li K."/>
            <person name="Yao Z."/>
        </authorList>
    </citation>
    <scope>NUCLEOTIDE SEQUENCE [MRNA]</scope>
    <scope>FUNCTION</scope>
    <scope>SUBCELLULAR LOCATION</scope>
    <scope>TISSUE SPECIFICITY</scope>
    <scope>MUTAGENESIS OF TYR-220 AND TYR-231</scope>
</reference>
<reference key="2">
    <citation type="journal article" date="2004" name="Proc. Natl. Acad. Sci. U.S.A.">
        <title>NFAM1, an immunoreceptor tyrosine-based activation motif-bearing molecule that regulates B cell development and signaling.</title>
        <authorList>
            <person name="Ohtsuka M."/>
            <person name="Arase H."/>
            <person name="Takeuchi A."/>
            <person name="Yamasaki S."/>
            <person name="Shiina R."/>
            <person name="Suenaga T."/>
            <person name="Sakurai D."/>
            <person name="Yokosuka T."/>
            <person name="Arase N."/>
            <person name="Iwashima M."/>
            <person name="Kitamura T."/>
            <person name="Moriya H."/>
            <person name="Saito T."/>
        </authorList>
    </citation>
    <scope>NUCLEOTIDE SEQUENCE [MRNA]</scope>
    <scope>FUNCTION</scope>
    <scope>SUBCELLULAR LOCATION</scope>
    <scope>TISSUE SPECIFICITY</scope>
    <scope>GLYCOSYLATION</scope>
    <scope>INTERACTION WITH SYK AND ZAP70</scope>
    <scope>MUTAGENESIS OF TYR-220 AND TYR-231</scope>
    <source>
        <tissue>T-cell</tissue>
    </source>
</reference>
<reference key="3">
    <citation type="submission" date="2006-03" db="EMBL/GenBank/DDBJ databases">
        <title>A genome annotation-driven approach to cloning the human ORFeome.</title>
        <authorList>
            <person name="Collins J.E."/>
            <person name="Wright C.L."/>
            <person name="Edwards C.A."/>
            <person name="Davis M.P."/>
            <person name="Grinham J.A."/>
            <person name="Cole C.G."/>
            <person name="Goward M.E."/>
            <person name="Aguado B."/>
            <person name="Mallya M."/>
            <person name="Mokrab Y."/>
            <person name="Huckle E.J."/>
            <person name="Beare D.M."/>
            <person name="Dunham I."/>
        </authorList>
    </citation>
    <scope>NUCLEOTIDE SEQUENCE [LARGE SCALE MRNA]</scope>
</reference>
<reference key="4">
    <citation type="journal article" date="1999" name="Nature">
        <title>The DNA sequence of human chromosome 22.</title>
        <authorList>
            <person name="Dunham I."/>
            <person name="Hunt A.R."/>
            <person name="Collins J.E."/>
            <person name="Bruskiewich R."/>
            <person name="Beare D.M."/>
            <person name="Clamp M."/>
            <person name="Smink L.J."/>
            <person name="Ainscough R."/>
            <person name="Almeida J.P."/>
            <person name="Babbage A.K."/>
            <person name="Bagguley C."/>
            <person name="Bailey J."/>
            <person name="Barlow K.F."/>
            <person name="Bates K.N."/>
            <person name="Beasley O.P."/>
            <person name="Bird C.P."/>
            <person name="Blakey S.E."/>
            <person name="Bridgeman A.M."/>
            <person name="Buck D."/>
            <person name="Burgess J."/>
            <person name="Burrill W.D."/>
            <person name="Burton J."/>
            <person name="Carder C."/>
            <person name="Carter N.P."/>
            <person name="Chen Y."/>
            <person name="Clark G."/>
            <person name="Clegg S.M."/>
            <person name="Cobley V.E."/>
            <person name="Cole C.G."/>
            <person name="Collier R.E."/>
            <person name="Connor R."/>
            <person name="Conroy D."/>
            <person name="Corby N.R."/>
            <person name="Coville G.J."/>
            <person name="Cox A.V."/>
            <person name="Davis J."/>
            <person name="Dawson E."/>
            <person name="Dhami P.D."/>
            <person name="Dockree C."/>
            <person name="Dodsworth S.J."/>
            <person name="Durbin R.M."/>
            <person name="Ellington A.G."/>
            <person name="Evans K.L."/>
            <person name="Fey J.M."/>
            <person name="Fleming K."/>
            <person name="French L."/>
            <person name="Garner A.A."/>
            <person name="Gilbert J.G.R."/>
            <person name="Goward M.E."/>
            <person name="Grafham D.V."/>
            <person name="Griffiths M.N.D."/>
            <person name="Hall C."/>
            <person name="Hall R.E."/>
            <person name="Hall-Tamlyn G."/>
            <person name="Heathcott R.W."/>
            <person name="Ho S."/>
            <person name="Holmes S."/>
            <person name="Hunt S.E."/>
            <person name="Jones M.C."/>
            <person name="Kershaw J."/>
            <person name="Kimberley A.M."/>
            <person name="King A."/>
            <person name="Laird G.K."/>
            <person name="Langford C.F."/>
            <person name="Leversha M.A."/>
            <person name="Lloyd C."/>
            <person name="Lloyd D.M."/>
            <person name="Martyn I.D."/>
            <person name="Mashreghi-Mohammadi M."/>
            <person name="Matthews L.H."/>
            <person name="Mccann O.T."/>
            <person name="Mcclay J."/>
            <person name="Mclaren S."/>
            <person name="McMurray A.A."/>
            <person name="Milne S.A."/>
            <person name="Mortimore B.J."/>
            <person name="Odell C.N."/>
            <person name="Pavitt R."/>
            <person name="Pearce A.V."/>
            <person name="Pearson D."/>
            <person name="Phillimore B.J.C.T."/>
            <person name="Phillips S.H."/>
            <person name="Plumb R.W."/>
            <person name="Ramsay H."/>
            <person name="Ramsey Y."/>
            <person name="Rogers L."/>
            <person name="Ross M.T."/>
            <person name="Scott C.E."/>
            <person name="Sehra H.K."/>
            <person name="Skuce C.D."/>
            <person name="Smalley S."/>
            <person name="Smith M.L."/>
            <person name="Soderlund C."/>
            <person name="Spragon L."/>
            <person name="Steward C.A."/>
            <person name="Sulston J.E."/>
            <person name="Swann R.M."/>
            <person name="Vaudin M."/>
            <person name="Wall M."/>
            <person name="Wallis J.M."/>
            <person name="Whiteley M.N."/>
            <person name="Willey D.L."/>
            <person name="Williams L."/>
            <person name="Williams S.A."/>
            <person name="Williamson H."/>
            <person name="Wilmer T.E."/>
            <person name="Wilming L."/>
            <person name="Wright C.L."/>
            <person name="Hubbard T."/>
            <person name="Bentley D.R."/>
            <person name="Beck S."/>
            <person name="Rogers J."/>
            <person name="Shimizu N."/>
            <person name="Minoshima S."/>
            <person name="Kawasaki K."/>
            <person name="Sasaki T."/>
            <person name="Asakawa S."/>
            <person name="Kudoh J."/>
            <person name="Shintani A."/>
            <person name="Shibuya K."/>
            <person name="Yoshizaki Y."/>
            <person name="Aoki N."/>
            <person name="Mitsuyama S."/>
            <person name="Roe B.A."/>
            <person name="Chen F."/>
            <person name="Chu L."/>
            <person name="Crabtree J."/>
            <person name="Deschamps S."/>
            <person name="Do A."/>
            <person name="Do T."/>
            <person name="Dorman A."/>
            <person name="Fang F."/>
            <person name="Fu Y."/>
            <person name="Hu P."/>
            <person name="Hua A."/>
            <person name="Kenton S."/>
            <person name="Lai H."/>
            <person name="Lao H.I."/>
            <person name="Lewis J."/>
            <person name="Lewis S."/>
            <person name="Lin S.-P."/>
            <person name="Loh P."/>
            <person name="Malaj E."/>
            <person name="Nguyen T."/>
            <person name="Pan H."/>
            <person name="Phan S."/>
            <person name="Qi S."/>
            <person name="Qian Y."/>
            <person name="Ray L."/>
            <person name="Ren Q."/>
            <person name="Shaull S."/>
            <person name="Sloan D."/>
            <person name="Song L."/>
            <person name="Wang Q."/>
            <person name="Wang Y."/>
            <person name="Wang Z."/>
            <person name="White J."/>
            <person name="Willingham D."/>
            <person name="Wu H."/>
            <person name="Yao Z."/>
            <person name="Zhan M."/>
            <person name="Zhang G."/>
            <person name="Chissoe S."/>
            <person name="Murray J."/>
            <person name="Miller N."/>
            <person name="Minx P."/>
            <person name="Fulton R."/>
            <person name="Johnson D."/>
            <person name="Bemis G."/>
            <person name="Bentley D."/>
            <person name="Bradshaw H."/>
            <person name="Bourne S."/>
            <person name="Cordes M."/>
            <person name="Du Z."/>
            <person name="Fulton L."/>
            <person name="Goela D."/>
            <person name="Graves T."/>
            <person name="Hawkins J."/>
            <person name="Hinds K."/>
            <person name="Kemp K."/>
            <person name="Latreille P."/>
            <person name="Layman D."/>
            <person name="Ozersky P."/>
            <person name="Rohlfing T."/>
            <person name="Scheet P."/>
            <person name="Walker C."/>
            <person name="Wamsley A."/>
            <person name="Wohldmann P."/>
            <person name="Pepin K."/>
            <person name="Nelson J."/>
            <person name="Korf I."/>
            <person name="Bedell J.A."/>
            <person name="Hillier L.W."/>
            <person name="Mardis E."/>
            <person name="Waterston R."/>
            <person name="Wilson R."/>
            <person name="Emanuel B.S."/>
            <person name="Shaikh T."/>
            <person name="Kurahashi H."/>
            <person name="Saitta S."/>
            <person name="Budarf M.L."/>
            <person name="McDermid H.E."/>
            <person name="Johnson A."/>
            <person name="Wong A.C.C."/>
            <person name="Morrow B.E."/>
            <person name="Edelmann L."/>
            <person name="Kim U.J."/>
            <person name="Shizuya H."/>
            <person name="Simon M.I."/>
            <person name="Dumanski J.P."/>
            <person name="Peyrard M."/>
            <person name="Kedra D."/>
            <person name="Seroussi E."/>
            <person name="Fransson I."/>
            <person name="Tapia I."/>
            <person name="Bruder C.E."/>
            <person name="O'Brien K.P."/>
            <person name="Wilkinson P."/>
            <person name="Bodenteich A."/>
            <person name="Hartman K."/>
            <person name="Hu X."/>
            <person name="Khan A.S."/>
            <person name="Lane L."/>
            <person name="Tilahun Y."/>
            <person name="Wright H."/>
        </authorList>
    </citation>
    <scope>NUCLEOTIDE SEQUENCE [LARGE SCALE GENOMIC DNA]</scope>
</reference>
<reference key="5">
    <citation type="submission" date="2005-07" db="EMBL/GenBank/DDBJ databases">
        <authorList>
            <person name="Mural R.J."/>
            <person name="Istrail S."/>
            <person name="Sutton G.G."/>
            <person name="Florea L."/>
            <person name="Halpern A.L."/>
            <person name="Mobarry C.M."/>
            <person name="Lippert R."/>
            <person name="Walenz B."/>
            <person name="Shatkay H."/>
            <person name="Dew I."/>
            <person name="Miller J.R."/>
            <person name="Flanigan M.J."/>
            <person name="Edwards N.J."/>
            <person name="Bolanos R."/>
            <person name="Fasulo D."/>
            <person name="Halldorsson B.V."/>
            <person name="Hannenhalli S."/>
            <person name="Turner R."/>
            <person name="Yooseph S."/>
            <person name="Lu F."/>
            <person name="Nusskern D.R."/>
            <person name="Shue B.C."/>
            <person name="Zheng X.H."/>
            <person name="Zhong F."/>
            <person name="Delcher A.L."/>
            <person name="Huson D.H."/>
            <person name="Kravitz S.A."/>
            <person name="Mouchard L."/>
            <person name="Reinert K."/>
            <person name="Remington K.A."/>
            <person name="Clark A.G."/>
            <person name="Waterman M.S."/>
            <person name="Eichler E.E."/>
            <person name="Adams M.D."/>
            <person name="Hunkapiller M.W."/>
            <person name="Myers E.W."/>
            <person name="Venter J.C."/>
        </authorList>
    </citation>
    <scope>NUCLEOTIDE SEQUENCE [LARGE SCALE GENOMIC DNA]</scope>
</reference>
<reference key="6">
    <citation type="journal article" date="2004" name="Genome Res.">
        <title>The status, quality, and expansion of the NIH full-length cDNA project: the Mammalian Gene Collection (MGC).</title>
        <authorList>
            <consortium name="The MGC Project Team"/>
        </authorList>
    </citation>
    <scope>NUCLEOTIDE SEQUENCE [LARGE SCALE MRNA]</scope>
</reference>
<reference key="7">
    <citation type="journal article" date="2003" name="DNA Res.">
        <title>Characterization of long cDNA clones from human adult spleen. II. The complete sequences of 81 cDNA clones.</title>
        <authorList>
            <person name="Jikuya H."/>
            <person name="Takano J."/>
            <person name="Kikuno R."/>
            <person name="Hirosawa M."/>
            <person name="Nagase T."/>
            <person name="Nomura N."/>
            <person name="Ohara O."/>
        </authorList>
    </citation>
    <scope>NUCLEOTIDE SEQUENCE [LARGE SCALE MRNA] OF 125-270</scope>
    <source>
        <tissue>Spleen</tissue>
    </source>
</reference>
<protein>
    <recommendedName>
        <fullName>NFAT activation molecule 1</fullName>
    </recommendedName>
    <alternativeName>
        <fullName>Calcineurin/NFAT-activating ITAM-containing protein</fullName>
    </alternativeName>
    <alternativeName>
        <fullName>NFAT-activating protein with ITAM motif 1</fullName>
    </alternativeName>
</protein>
<sequence length="270" mass="29686">MENQPVRWRALPGLPRPPGLPAAPWLLLGVLLLPGTLRLAGGQSVTHTGLPIMASLANTAISFSCRITYPYTPQFKVFTVSYFHEDLQGQRSPKKPTNCHPGLGTENQSHTLDCQVTLVLPGASATGTYYCSVHWPHSTVRGSGTFILVRDAGYREPPQSPQKLLLFGFTGLLSVLSVVGTALLLWNKKRMRGPGKDPTRKCPDPRSASSPKQHPSESVYTALQRRETEVYACIENEDGSSPTAKQSPLSQERPHRFEDDGELNLVYENL</sequence>
<keyword id="KW-1003">Cell membrane</keyword>
<keyword id="KW-1015">Disulfide bond</keyword>
<keyword id="KW-0325">Glycoprotein</keyword>
<keyword id="KW-0393">Immunoglobulin domain</keyword>
<keyword id="KW-0472">Membrane</keyword>
<keyword id="KW-0597">Phosphoprotein</keyword>
<keyword id="KW-1267">Proteomics identification</keyword>
<keyword id="KW-1185">Reference proteome</keyword>
<keyword id="KW-0732">Signal</keyword>
<keyword id="KW-0812">Transmembrane</keyword>
<keyword id="KW-1133">Transmembrane helix</keyword>
<gene>
    <name type="primary">NFAM1</name>
    <name type="synonym">CNAIP</name>
</gene>
<proteinExistence type="evidence at protein level"/>
<dbReference type="EMBL" id="AY247409">
    <property type="protein sequence ID" value="AAO91847.1"/>
    <property type="molecule type" value="mRNA"/>
</dbReference>
<dbReference type="EMBL" id="AY121370">
    <property type="protein sequence ID" value="AAM83133.1"/>
    <property type="molecule type" value="mRNA"/>
</dbReference>
<dbReference type="EMBL" id="CT841509">
    <property type="protein sequence ID" value="CAJ86439.1"/>
    <property type="molecule type" value="mRNA"/>
</dbReference>
<dbReference type="EMBL" id="AL022316">
    <property type="status" value="NOT_ANNOTATED_CDS"/>
    <property type="molecule type" value="Genomic_DNA"/>
</dbReference>
<dbReference type="EMBL" id="CH471095">
    <property type="protein sequence ID" value="EAW60505.1"/>
    <property type="molecule type" value="Genomic_DNA"/>
</dbReference>
<dbReference type="EMBL" id="BC038241">
    <property type="protein sequence ID" value="AAH38241.2"/>
    <property type="molecule type" value="mRNA"/>
</dbReference>
<dbReference type="EMBL" id="AK074094">
    <property type="protein sequence ID" value="BAB84920.1"/>
    <property type="molecule type" value="mRNA"/>
</dbReference>
<dbReference type="CCDS" id="CCDS14034.1"/>
<dbReference type="RefSeq" id="NP_001305252.1">
    <property type="nucleotide sequence ID" value="NM_001318323.1"/>
</dbReference>
<dbReference type="RefSeq" id="NP_666017.1">
    <property type="nucleotide sequence ID" value="NM_145912.8"/>
</dbReference>
<dbReference type="SMR" id="Q8NET5"/>
<dbReference type="BioGRID" id="127289">
    <property type="interactions" value="13"/>
</dbReference>
<dbReference type="FunCoup" id="Q8NET5">
    <property type="interactions" value="83"/>
</dbReference>
<dbReference type="IntAct" id="Q8NET5">
    <property type="interactions" value="10"/>
</dbReference>
<dbReference type="STRING" id="9606.ENSP00000333680"/>
<dbReference type="GlyCosmos" id="Q8NET5">
    <property type="glycosylation" value="1 site, No reported glycans"/>
</dbReference>
<dbReference type="GlyGen" id="Q8NET5">
    <property type="glycosylation" value="1 site, 1 N-linked glycan (1 site)"/>
</dbReference>
<dbReference type="iPTMnet" id="Q8NET5"/>
<dbReference type="PhosphoSitePlus" id="Q8NET5"/>
<dbReference type="BioMuta" id="NFAM1"/>
<dbReference type="DMDM" id="34222694"/>
<dbReference type="MassIVE" id="Q8NET5"/>
<dbReference type="PaxDb" id="9606-ENSP00000333680"/>
<dbReference type="PeptideAtlas" id="Q8NET5"/>
<dbReference type="ProteomicsDB" id="73214"/>
<dbReference type="Antibodypedia" id="27327">
    <property type="antibodies" value="116 antibodies from 25 providers"/>
</dbReference>
<dbReference type="DNASU" id="150372"/>
<dbReference type="Ensembl" id="ENST00000329021.10">
    <property type="protein sequence ID" value="ENSP00000333680.5"/>
    <property type="gene ID" value="ENSG00000235568.7"/>
</dbReference>
<dbReference type="GeneID" id="150372"/>
<dbReference type="KEGG" id="hsa:150372"/>
<dbReference type="MANE-Select" id="ENST00000329021.10">
    <property type="protein sequence ID" value="ENSP00000333680.5"/>
    <property type="RefSeq nucleotide sequence ID" value="NM_145912.8"/>
    <property type="RefSeq protein sequence ID" value="NP_666017.1"/>
</dbReference>
<dbReference type="UCSC" id="uc003bcn.5">
    <property type="organism name" value="human"/>
</dbReference>
<dbReference type="AGR" id="HGNC:29872"/>
<dbReference type="CTD" id="150372"/>
<dbReference type="DisGeNET" id="150372"/>
<dbReference type="GeneCards" id="NFAM1"/>
<dbReference type="HGNC" id="HGNC:29872">
    <property type="gene designation" value="NFAM1"/>
</dbReference>
<dbReference type="HPA" id="ENSG00000235568">
    <property type="expression patterns" value="Tissue enhanced (bone marrow, lymphoid tissue)"/>
</dbReference>
<dbReference type="MIM" id="608740">
    <property type="type" value="gene"/>
</dbReference>
<dbReference type="neXtProt" id="NX_Q8NET5"/>
<dbReference type="OpenTargets" id="ENSG00000235568"/>
<dbReference type="PharmGKB" id="PA134949664"/>
<dbReference type="VEuPathDB" id="HostDB:ENSG00000235568"/>
<dbReference type="eggNOG" id="ENOG502SDBU">
    <property type="taxonomic scope" value="Eukaryota"/>
</dbReference>
<dbReference type="GeneTree" id="ENSGT00390000000787"/>
<dbReference type="HOGENOM" id="CLU_083046_1_0_1"/>
<dbReference type="InParanoid" id="Q8NET5"/>
<dbReference type="OMA" id="FKDDGEF"/>
<dbReference type="OrthoDB" id="9898104at2759"/>
<dbReference type="PAN-GO" id="Q8NET5">
    <property type="GO annotations" value="4 GO annotations based on evolutionary models"/>
</dbReference>
<dbReference type="PhylomeDB" id="Q8NET5"/>
<dbReference type="TreeFam" id="TF336307"/>
<dbReference type="PathwayCommons" id="Q8NET5"/>
<dbReference type="Reactome" id="R-HSA-6798695">
    <property type="pathway name" value="Neutrophil degranulation"/>
</dbReference>
<dbReference type="SignaLink" id="Q8NET5"/>
<dbReference type="BioGRID-ORCS" id="150372">
    <property type="hits" value="10 hits in 1148 CRISPR screens"/>
</dbReference>
<dbReference type="ChiTaRS" id="NFAM1">
    <property type="organism name" value="human"/>
</dbReference>
<dbReference type="GenomeRNAi" id="150372"/>
<dbReference type="Pharos" id="Q8NET5">
    <property type="development level" value="Tbio"/>
</dbReference>
<dbReference type="PRO" id="PR:Q8NET5"/>
<dbReference type="Proteomes" id="UP000005640">
    <property type="component" value="Chromosome 22"/>
</dbReference>
<dbReference type="RNAct" id="Q8NET5">
    <property type="molecule type" value="protein"/>
</dbReference>
<dbReference type="Bgee" id="ENSG00000235568">
    <property type="expression patterns" value="Expressed in monocyte and 179 other cell types or tissues"/>
</dbReference>
<dbReference type="ExpressionAtlas" id="Q8NET5">
    <property type="expression patterns" value="baseline and differential"/>
</dbReference>
<dbReference type="GO" id="GO:0035577">
    <property type="term" value="C:azurophil granule membrane"/>
    <property type="evidence" value="ECO:0000304"/>
    <property type="project" value="Reactome"/>
</dbReference>
<dbReference type="GO" id="GO:0016020">
    <property type="term" value="C:membrane"/>
    <property type="evidence" value="ECO:0000314"/>
    <property type="project" value="HGNC-UCL"/>
</dbReference>
<dbReference type="GO" id="GO:0045121">
    <property type="term" value="C:membrane raft"/>
    <property type="evidence" value="ECO:0000318"/>
    <property type="project" value="GO_Central"/>
</dbReference>
<dbReference type="GO" id="GO:0005886">
    <property type="term" value="C:plasma membrane"/>
    <property type="evidence" value="ECO:0000304"/>
    <property type="project" value="Reactome"/>
</dbReference>
<dbReference type="GO" id="GO:0004888">
    <property type="term" value="F:transmembrane signaling receptor activity"/>
    <property type="evidence" value="ECO:0000314"/>
    <property type="project" value="HGNC-UCL"/>
</dbReference>
<dbReference type="GO" id="GO:0030183">
    <property type="term" value="P:B cell differentiation"/>
    <property type="evidence" value="ECO:0000250"/>
    <property type="project" value="HGNC-UCL"/>
</dbReference>
<dbReference type="GO" id="GO:0050853">
    <property type="term" value="P:B cell receptor signaling pathway"/>
    <property type="evidence" value="ECO:0000250"/>
    <property type="project" value="HGNC-UCL"/>
</dbReference>
<dbReference type="GO" id="GO:0033173">
    <property type="term" value="P:calcineurin-NFAT signaling cascade"/>
    <property type="evidence" value="ECO:0000314"/>
    <property type="project" value="HGNC-UCL"/>
</dbReference>
<dbReference type="GO" id="GO:0006954">
    <property type="term" value="P:inflammatory response"/>
    <property type="evidence" value="ECO:0000303"/>
    <property type="project" value="HGNC-UCL"/>
</dbReference>
<dbReference type="GO" id="GO:0035556">
    <property type="term" value="P:intracellular signal transduction"/>
    <property type="evidence" value="ECO:0000314"/>
    <property type="project" value="HGNC-UCL"/>
</dbReference>
<dbReference type="GO" id="GO:0050861">
    <property type="term" value="P:positive regulation of B cell receptor signaling pathway"/>
    <property type="evidence" value="ECO:0007669"/>
    <property type="project" value="InterPro"/>
</dbReference>
<dbReference type="GO" id="GO:0001819">
    <property type="term" value="P:positive regulation of cytokine production"/>
    <property type="evidence" value="ECO:0000303"/>
    <property type="project" value="HGNC-UCL"/>
</dbReference>
<dbReference type="GO" id="GO:0045577">
    <property type="term" value="P:regulation of B cell differentiation"/>
    <property type="evidence" value="ECO:0007669"/>
    <property type="project" value="InterPro"/>
</dbReference>
<dbReference type="GO" id="GO:0007165">
    <property type="term" value="P:signal transduction"/>
    <property type="evidence" value="ECO:0000314"/>
    <property type="project" value="HGNC-UCL"/>
</dbReference>
<dbReference type="InterPro" id="IPR033549">
    <property type="entry name" value="NFAM1"/>
</dbReference>
<dbReference type="InterPro" id="IPR003110">
    <property type="entry name" value="Phos_immunorcpt_sig_ITAM"/>
</dbReference>
<dbReference type="PANTHER" id="PTHR35680">
    <property type="entry name" value="NFAT ACTIVATION MOLECULE 1"/>
    <property type="match status" value="1"/>
</dbReference>
<dbReference type="PANTHER" id="PTHR35680:SF1">
    <property type="entry name" value="NFAT ACTIVATION MOLECULE 1"/>
    <property type="match status" value="1"/>
</dbReference>
<dbReference type="PROSITE" id="PS51055">
    <property type="entry name" value="ITAM_1"/>
    <property type="match status" value="1"/>
</dbReference>
<feature type="signal peptide" evidence="2">
    <location>
        <begin position="1"/>
        <end position="42"/>
    </location>
</feature>
<feature type="chain" id="PRO_0000015046" description="NFAT activation molecule 1">
    <location>
        <begin position="43"/>
        <end position="270"/>
    </location>
</feature>
<feature type="topological domain" description="Extracellular" evidence="2">
    <location>
        <begin position="43"/>
        <end position="163"/>
    </location>
</feature>
<feature type="transmembrane region" description="Helical" evidence="2">
    <location>
        <begin position="164"/>
        <end position="184"/>
    </location>
</feature>
<feature type="topological domain" description="Cytoplasmic" evidence="2">
    <location>
        <begin position="185"/>
        <end position="270"/>
    </location>
</feature>
<feature type="domain" description="Ig-like V-type">
    <location>
        <begin position="50"/>
        <end position="150"/>
    </location>
</feature>
<feature type="domain" description="ITAM" evidence="3">
    <location>
        <begin position="209"/>
        <end position="237"/>
    </location>
</feature>
<feature type="region of interest" description="Disordered" evidence="4">
    <location>
        <begin position="190"/>
        <end position="219"/>
    </location>
</feature>
<feature type="region of interest" description="Disordered" evidence="4">
    <location>
        <begin position="234"/>
        <end position="262"/>
    </location>
</feature>
<feature type="compositionally biased region" description="Basic and acidic residues" evidence="4">
    <location>
        <begin position="194"/>
        <end position="204"/>
    </location>
</feature>
<feature type="compositionally biased region" description="Polar residues" evidence="4">
    <location>
        <begin position="207"/>
        <end position="219"/>
    </location>
</feature>
<feature type="compositionally biased region" description="Polar residues" evidence="4">
    <location>
        <begin position="239"/>
        <end position="250"/>
    </location>
</feature>
<feature type="modified residue" description="Phosphotyrosine" evidence="7">
    <location>
        <position position="220"/>
    </location>
</feature>
<feature type="modified residue" description="Phosphotyrosine" evidence="7">
    <location>
        <position position="231"/>
    </location>
</feature>
<feature type="glycosylation site" description="N-linked (GlcNAc...) asparagine" evidence="2">
    <location>
        <position position="107"/>
    </location>
</feature>
<feature type="disulfide bond" evidence="1">
    <location>
        <begin position="65"/>
        <end position="114"/>
    </location>
</feature>
<feature type="sequence variant" id="VAR_049964" description="In dbSNP:rs34296033.">
    <original>H</original>
    <variation>Y</variation>
    <location>
        <position position="137"/>
    </location>
</feature>
<feature type="sequence variant" id="VAR_049965" description="In dbSNP:rs17003048.">
    <original>N</original>
    <variation>K</variation>
    <location>
        <position position="187"/>
    </location>
</feature>
<feature type="mutagenesis site" description="Abolishes the ITAM-mediated-activating activity." evidence="5 6">
    <original>Y</original>
    <variation>A</variation>
    <variation>F</variation>
    <location>
        <position position="220"/>
    </location>
</feature>
<feature type="mutagenesis site" description="Abolishes the ITAM-mediated-activating activity." evidence="5 6">
    <original>Y</original>
    <variation>A</variation>
    <variation>F</variation>
    <location>
        <position position="231"/>
    </location>
</feature>
<comment type="function">
    <text evidence="5 6">May function in immune system as a receptor which activates via the calcineurin/NFAT-signaling pathway the downstream cytokine gene promoters. Activates the transcription of IL-13 and TNF-alpha promoters. May be involved in the regulation of B-cell, but not T-cell, development. Overexpression activates downstream effectors without ligand binding or antibody cross-linking.</text>
</comment>
<comment type="subunit">
    <text evidence="1">No direct interaction with the B-cell antigen receptor (BCR). Interacts with SYK; probably involved in BCR signaling. Interacts with ZAP70 (By similarity).</text>
</comment>
<comment type="interaction">
    <interactant intactId="EBI-11990542">
        <id>Q8NET5</id>
    </interactant>
    <interactant intactId="EBI-10183342">
        <id>Q9H165-2</id>
        <label>BCL11A</label>
    </interactant>
    <organismsDiffer>false</organismsDiffer>
    <experiments>3</experiments>
</comment>
<comment type="interaction">
    <interactant intactId="EBI-11990542">
        <id>Q8NET5</id>
    </interactant>
    <interactant intactId="EBI-8773684">
        <id>Q0VDF9</id>
        <label>HSPA14</label>
    </interactant>
    <organismsDiffer>false</organismsDiffer>
    <experiments>2</experiments>
</comment>
<comment type="interaction">
    <interactant intactId="EBI-11990542">
        <id>Q8NET5</id>
    </interactant>
    <interactant intactId="EBI-944295">
        <id>Q969L2</id>
        <label>MAL2</label>
    </interactant>
    <organismsDiffer>false</organismsDiffer>
    <experiments>3</experiments>
</comment>
<comment type="interaction">
    <interactant intactId="EBI-11990542">
        <id>Q8NET5</id>
    </interactant>
    <interactant intactId="EBI-13636688">
        <id>P15884-3</id>
        <label>TCF4</label>
    </interactant>
    <organismsDiffer>false</organismsDiffer>
    <experiments>3</experiments>
</comment>
<comment type="subcellular location">
    <subcellularLocation>
        <location evidence="1">Cell membrane</location>
        <topology evidence="1">Single-pass type I membrane protein</topology>
    </subcellularLocation>
    <text evidence="1">Partially recruited to lipid rafts upon BCR stimulation.</text>
</comment>
<comment type="tissue specificity">
    <text evidence="5 6">Highly expressed in neutrophils, primary monocytes, mast cells, monocytic cell lines and lymphocytes. Also expressed in spleen B and T-cells, and lung. Expressed at low level in non-immune tissue.</text>
</comment>
<comment type="domain">
    <text>The ITAM domain displays no close similarity to any existing ITAMs, except for four conserved positions. The phosphorylated ITAM domain binds ZAP70 and SYK.</text>
</comment>
<comment type="PTM">
    <text evidence="6">N-glycosylated.</text>
</comment>
<organism>
    <name type="scientific">Homo sapiens</name>
    <name type="common">Human</name>
    <dbReference type="NCBI Taxonomy" id="9606"/>
    <lineage>
        <taxon>Eukaryota</taxon>
        <taxon>Metazoa</taxon>
        <taxon>Chordata</taxon>
        <taxon>Craniata</taxon>
        <taxon>Vertebrata</taxon>
        <taxon>Euteleostomi</taxon>
        <taxon>Mammalia</taxon>
        <taxon>Eutheria</taxon>
        <taxon>Euarchontoglires</taxon>
        <taxon>Primates</taxon>
        <taxon>Haplorrhini</taxon>
        <taxon>Catarrhini</taxon>
        <taxon>Hominidae</taxon>
        <taxon>Homo</taxon>
    </lineage>
</organism>
<evidence type="ECO:0000250" key="1"/>
<evidence type="ECO:0000255" key="2"/>
<evidence type="ECO:0000255" key="3">
    <source>
        <dbReference type="PROSITE-ProRule" id="PRU00379"/>
    </source>
</evidence>
<evidence type="ECO:0000256" key="4">
    <source>
        <dbReference type="SAM" id="MobiDB-lite"/>
    </source>
</evidence>
<evidence type="ECO:0000269" key="5">
    <source>
    </source>
</evidence>
<evidence type="ECO:0000269" key="6">
    <source>
    </source>
</evidence>
<evidence type="ECO:0000305" key="7"/>
<accession>Q8NET5</accession>
<accession>B0QYD0</accession>
<accession>Q20WL2</accession>
<accession>Q5JZ96</accession>
<accession>Q8IUY8</accession>
<accession>Q8TEM8</accession>
<name>NFAM1_HUMAN</name>